<name>TM116_DANRE</name>
<feature type="chain" id="PRO_0000360407" description="Transmembrane protein 116">
    <location>
        <begin position="1"/>
        <end position="361"/>
    </location>
</feature>
<feature type="transmembrane region" description="Helical" evidence="1">
    <location>
        <begin position="29"/>
        <end position="49"/>
    </location>
</feature>
<feature type="transmembrane region" description="Helical" evidence="1">
    <location>
        <begin position="64"/>
        <end position="84"/>
    </location>
</feature>
<feature type="transmembrane region" description="Helical" evidence="1">
    <location>
        <begin position="103"/>
        <end position="123"/>
    </location>
</feature>
<feature type="transmembrane region" description="Helical" evidence="1">
    <location>
        <begin position="147"/>
        <end position="167"/>
    </location>
</feature>
<feature type="transmembrane region" description="Helical" evidence="1">
    <location>
        <begin position="210"/>
        <end position="230"/>
    </location>
</feature>
<feature type="transmembrane region" description="Helical" evidence="1">
    <location>
        <begin position="261"/>
        <end position="281"/>
    </location>
</feature>
<feature type="transmembrane region" description="Helical" evidence="1">
    <location>
        <begin position="295"/>
        <end position="315"/>
    </location>
</feature>
<proteinExistence type="evidence at transcript level"/>
<accession>A2BGS3</accession>
<reference key="1">
    <citation type="journal article" date="2013" name="Nature">
        <title>The zebrafish reference genome sequence and its relationship to the human genome.</title>
        <authorList>
            <person name="Howe K."/>
            <person name="Clark M.D."/>
            <person name="Torroja C.F."/>
            <person name="Torrance J."/>
            <person name="Berthelot C."/>
            <person name="Muffato M."/>
            <person name="Collins J.E."/>
            <person name="Humphray S."/>
            <person name="McLaren K."/>
            <person name="Matthews L."/>
            <person name="McLaren S."/>
            <person name="Sealy I."/>
            <person name="Caccamo M."/>
            <person name="Churcher C."/>
            <person name="Scott C."/>
            <person name="Barrett J.C."/>
            <person name="Koch R."/>
            <person name="Rauch G.J."/>
            <person name="White S."/>
            <person name="Chow W."/>
            <person name="Kilian B."/>
            <person name="Quintais L.T."/>
            <person name="Guerra-Assuncao J.A."/>
            <person name="Zhou Y."/>
            <person name="Gu Y."/>
            <person name="Yen J."/>
            <person name="Vogel J.H."/>
            <person name="Eyre T."/>
            <person name="Redmond S."/>
            <person name="Banerjee R."/>
            <person name="Chi J."/>
            <person name="Fu B."/>
            <person name="Langley E."/>
            <person name="Maguire S.F."/>
            <person name="Laird G.K."/>
            <person name="Lloyd D."/>
            <person name="Kenyon E."/>
            <person name="Donaldson S."/>
            <person name="Sehra H."/>
            <person name="Almeida-King J."/>
            <person name="Loveland J."/>
            <person name="Trevanion S."/>
            <person name="Jones M."/>
            <person name="Quail M."/>
            <person name="Willey D."/>
            <person name="Hunt A."/>
            <person name="Burton J."/>
            <person name="Sims S."/>
            <person name="McLay K."/>
            <person name="Plumb B."/>
            <person name="Davis J."/>
            <person name="Clee C."/>
            <person name="Oliver K."/>
            <person name="Clark R."/>
            <person name="Riddle C."/>
            <person name="Elliot D."/>
            <person name="Threadgold G."/>
            <person name="Harden G."/>
            <person name="Ware D."/>
            <person name="Begum S."/>
            <person name="Mortimore B."/>
            <person name="Kerry G."/>
            <person name="Heath P."/>
            <person name="Phillimore B."/>
            <person name="Tracey A."/>
            <person name="Corby N."/>
            <person name="Dunn M."/>
            <person name="Johnson C."/>
            <person name="Wood J."/>
            <person name="Clark S."/>
            <person name="Pelan S."/>
            <person name="Griffiths G."/>
            <person name="Smith M."/>
            <person name="Glithero R."/>
            <person name="Howden P."/>
            <person name="Barker N."/>
            <person name="Lloyd C."/>
            <person name="Stevens C."/>
            <person name="Harley J."/>
            <person name="Holt K."/>
            <person name="Panagiotidis G."/>
            <person name="Lovell J."/>
            <person name="Beasley H."/>
            <person name="Henderson C."/>
            <person name="Gordon D."/>
            <person name="Auger K."/>
            <person name="Wright D."/>
            <person name="Collins J."/>
            <person name="Raisen C."/>
            <person name="Dyer L."/>
            <person name="Leung K."/>
            <person name="Robertson L."/>
            <person name="Ambridge K."/>
            <person name="Leongamornlert D."/>
            <person name="McGuire S."/>
            <person name="Gilderthorp R."/>
            <person name="Griffiths C."/>
            <person name="Manthravadi D."/>
            <person name="Nichol S."/>
            <person name="Barker G."/>
            <person name="Whitehead S."/>
            <person name="Kay M."/>
            <person name="Brown J."/>
            <person name="Murnane C."/>
            <person name="Gray E."/>
            <person name="Humphries M."/>
            <person name="Sycamore N."/>
            <person name="Barker D."/>
            <person name="Saunders D."/>
            <person name="Wallis J."/>
            <person name="Babbage A."/>
            <person name="Hammond S."/>
            <person name="Mashreghi-Mohammadi M."/>
            <person name="Barr L."/>
            <person name="Martin S."/>
            <person name="Wray P."/>
            <person name="Ellington A."/>
            <person name="Matthews N."/>
            <person name="Ellwood M."/>
            <person name="Woodmansey R."/>
            <person name="Clark G."/>
            <person name="Cooper J."/>
            <person name="Tromans A."/>
            <person name="Grafham D."/>
            <person name="Skuce C."/>
            <person name="Pandian R."/>
            <person name="Andrews R."/>
            <person name="Harrison E."/>
            <person name="Kimberley A."/>
            <person name="Garnett J."/>
            <person name="Fosker N."/>
            <person name="Hall R."/>
            <person name="Garner P."/>
            <person name="Kelly D."/>
            <person name="Bird C."/>
            <person name="Palmer S."/>
            <person name="Gehring I."/>
            <person name="Berger A."/>
            <person name="Dooley C.M."/>
            <person name="Ersan-Urun Z."/>
            <person name="Eser C."/>
            <person name="Geiger H."/>
            <person name="Geisler M."/>
            <person name="Karotki L."/>
            <person name="Kirn A."/>
            <person name="Konantz J."/>
            <person name="Konantz M."/>
            <person name="Oberlander M."/>
            <person name="Rudolph-Geiger S."/>
            <person name="Teucke M."/>
            <person name="Lanz C."/>
            <person name="Raddatz G."/>
            <person name="Osoegawa K."/>
            <person name="Zhu B."/>
            <person name="Rapp A."/>
            <person name="Widaa S."/>
            <person name="Langford C."/>
            <person name="Yang F."/>
            <person name="Schuster S.C."/>
            <person name="Carter N.P."/>
            <person name="Harrow J."/>
            <person name="Ning Z."/>
            <person name="Herrero J."/>
            <person name="Searle S.M."/>
            <person name="Enright A."/>
            <person name="Geisler R."/>
            <person name="Plasterk R.H."/>
            <person name="Lee C."/>
            <person name="Westerfield M."/>
            <person name="de Jong P.J."/>
            <person name="Zon L.I."/>
            <person name="Postlethwait J.H."/>
            <person name="Nusslein-Volhard C."/>
            <person name="Hubbard T.J."/>
            <person name="Roest Crollius H."/>
            <person name="Rogers J."/>
            <person name="Stemple D.L."/>
        </authorList>
    </citation>
    <scope>NUCLEOTIDE SEQUENCE [LARGE SCALE GENOMIC DNA]</scope>
    <source>
        <strain>Tuebingen</strain>
    </source>
</reference>
<reference key="2">
    <citation type="submission" date="2007-11" db="EMBL/GenBank/DDBJ databases">
        <authorList>
            <consortium name="NIH - Zebrafish Gene Collection (ZGC) project"/>
        </authorList>
    </citation>
    <scope>NUCLEOTIDE SEQUENCE [LARGE SCALE MRNA]</scope>
</reference>
<keyword id="KW-0472">Membrane</keyword>
<keyword id="KW-1185">Reference proteome</keyword>
<keyword id="KW-0812">Transmembrane</keyword>
<keyword id="KW-1133">Transmembrane helix</keyword>
<evidence type="ECO:0000255" key="1"/>
<evidence type="ECO:0000305" key="2"/>
<dbReference type="EMBL" id="BX510999">
    <property type="protein sequence ID" value="CAM13327.1"/>
    <property type="molecule type" value="Genomic_DNA"/>
</dbReference>
<dbReference type="EMBL" id="BC154518">
    <property type="protein sequence ID" value="AAI54519.1"/>
    <property type="molecule type" value="mRNA"/>
</dbReference>
<dbReference type="RefSeq" id="NP_001108179.1">
    <property type="nucleotide sequence ID" value="NM_001114707.1"/>
</dbReference>
<dbReference type="SMR" id="A2BGS3"/>
<dbReference type="FunCoup" id="A2BGS3">
    <property type="interactions" value="804"/>
</dbReference>
<dbReference type="STRING" id="7955.ENSDARP00000100247"/>
<dbReference type="PaxDb" id="7955-ENSDARP00000100247"/>
<dbReference type="Ensembl" id="ENSDART00000112692">
    <property type="protein sequence ID" value="ENSDARP00000100247"/>
    <property type="gene ID" value="ENSDARG00000077155"/>
</dbReference>
<dbReference type="GeneID" id="100003849"/>
<dbReference type="KEGG" id="dre:100003849"/>
<dbReference type="AGR" id="ZFIN:ZDB-GENE-060526-53"/>
<dbReference type="CTD" id="89894"/>
<dbReference type="ZFIN" id="ZDB-GENE-060526-53">
    <property type="gene designation" value="tmem116"/>
</dbReference>
<dbReference type="eggNOG" id="KOG0370">
    <property type="taxonomic scope" value="Eukaryota"/>
</dbReference>
<dbReference type="HOGENOM" id="CLU_057808_0_0_1"/>
<dbReference type="InParanoid" id="A2BGS3"/>
<dbReference type="OMA" id="YTISYIW"/>
<dbReference type="OrthoDB" id="10070607at2759"/>
<dbReference type="PhylomeDB" id="A2BGS3"/>
<dbReference type="TreeFam" id="TF330947"/>
<dbReference type="PRO" id="PR:A2BGS3"/>
<dbReference type="Proteomes" id="UP000000437">
    <property type="component" value="Chromosome 5"/>
</dbReference>
<dbReference type="Bgee" id="ENSDARG00000077155">
    <property type="expression patterns" value="Expressed in zone of skin and 16 other cell types or tissues"/>
</dbReference>
<dbReference type="GO" id="GO:0005886">
    <property type="term" value="C:plasma membrane"/>
    <property type="evidence" value="ECO:0000318"/>
    <property type="project" value="GO_Central"/>
</dbReference>
<dbReference type="GO" id="GO:0004930">
    <property type="term" value="F:G protein-coupled receptor activity"/>
    <property type="evidence" value="ECO:0000318"/>
    <property type="project" value="GO_Central"/>
</dbReference>
<dbReference type="GO" id="GO:0007189">
    <property type="term" value="P:adenylate cyclase-activating G protein-coupled receptor signaling pathway"/>
    <property type="evidence" value="ECO:0000318"/>
    <property type="project" value="GO_Central"/>
</dbReference>
<dbReference type="Gene3D" id="1.20.1070.10">
    <property type="entry name" value="Rhodopsin 7-helix transmembrane proteins"/>
    <property type="match status" value="1"/>
</dbReference>
<dbReference type="InterPro" id="IPR022343">
    <property type="entry name" value="GCR1-cAMP_receptor"/>
</dbReference>
<dbReference type="PANTHER" id="PTHR23112">
    <property type="entry name" value="G PROTEIN-COUPLED RECEPTOR 157-RELATED"/>
    <property type="match status" value="1"/>
</dbReference>
<dbReference type="PANTHER" id="PTHR23112:SF0">
    <property type="entry name" value="TRANSMEMBRANE PROTEIN 116"/>
    <property type="match status" value="1"/>
</dbReference>
<dbReference type="PRINTS" id="PR02001">
    <property type="entry name" value="GCR1CAMPR"/>
</dbReference>
<dbReference type="SUPFAM" id="SSF81321">
    <property type="entry name" value="Family A G protein-coupled receptor-like"/>
    <property type="match status" value="1"/>
</dbReference>
<sequence>MDIFGENKTQMNTTTPTENWTSVYSIVRWIQMTMAVLSILGAGSIILYAAFQRLVKKPEVLPLFLLSLTDLLLALSWLCGGLLFTQSCNSYATCYNLHIVEQTLYMASFFYTLHYVWVLYTGLNGKYHRRLNGFPAEAARTRNCRCLGPVLSCLLPLLLTAPVFVAGNVFQCYTNFTQPYRCLLMHTGAVYLTSSASPELTACSIIQEYCMAIFLGTFLITIVGMSIFMGKARSLYKRVVTSQGFFGGSHWTTLRLLERRMVLYPSAFFFCWGPALLLATMMLVKPDVIEGKMGVALYILQAFTSASQGLLNCLVYGWTQKHFRSLSSSTVRDANTQTPLLRSQKPNYAALHSAASLTNFV</sequence>
<organism>
    <name type="scientific">Danio rerio</name>
    <name type="common">Zebrafish</name>
    <name type="synonym">Brachydanio rerio</name>
    <dbReference type="NCBI Taxonomy" id="7955"/>
    <lineage>
        <taxon>Eukaryota</taxon>
        <taxon>Metazoa</taxon>
        <taxon>Chordata</taxon>
        <taxon>Craniata</taxon>
        <taxon>Vertebrata</taxon>
        <taxon>Euteleostomi</taxon>
        <taxon>Actinopterygii</taxon>
        <taxon>Neopterygii</taxon>
        <taxon>Teleostei</taxon>
        <taxon>Ostariophysi</taxon>
        <taxon>Cypriniformes</taxon>
        <taxon>Danionidae</taxon>
        <taxon>Danioninae</taxon>
        <taxon>Danio</taxon>
    </lineage>
</organism>
<gene>
    <name type="primary">tmem116</name>
    <name type="ORF">si:ch211-157p22.10</name>
</gene>
<comment type="subcellular location">
    <subcellularLocation>
        <location evidence="2">Membrane</location>
        <topology evidence="2">Multi-pass membrane protein</topology>
    </subcellularLocation>
</comment>
<protein>
    <recommendedName>
        <fullName>Transmembrane protein 116</fullName>
    </recommendedName>
</protein>